<feature type="chain" id="PRO_1000212355" description="UPF0235 protein RAF_ORF1191">
    <location>
        <begin position="1"/>
        <end position="105"/>
    </location>
</feature>
<reference key="1">
    <citation type="journal article" date="2009" name="BMC Genomics">
        <title>Analysis of the Rickettsia africae genome reveals that virulence acquisition in Rickettsia species may be explained by genome reduction.</title>
        <authorList>
            <person name="Fournier P.-E."/>
            <person name="El Karkouri K."/>
            <person name="Leroy Q."/>
            <person name="Robert C."/>
            <person name="Giumelli B."/>
            <person name="Renesto P."/>
            <person name="Socolovschi C."/>
            <person name="Parola P."/>
            <person name="Audic S."/>
            <person name="Raoult D."/>
        </authorList>
    </citation>
    <scope>NUCLEOTIDE SEQUENCE [LARGE SCALE GENOMIC DNA]</scope>
    <source>
        <strain>ESF-5</strain>
    </source>
</reference>
<comment type="similarity">
    <text evidence="1">Belongs to the UPF0235 family.</text>
</comment>
<sequence>MDKFYNYNSSSHQALLSFKVKPNSKQNLISNFVIINNIPYLKLSIKAIPEQGKANEEIINYLAKEWKLSRSNIEIIKGHTHSLKTILIKNINEDYLNLIINSYIK</sequence>
<accession>C3PLX4</accession>
<evidence type="ECO:0000255" key="1">
    <source>
        <dbReference type="HAMAP-Rule" id="MF_00634"/>
    </source>
</evidence>
<gene>
    <name type="ordered locus">RAF_ORF1191</name>
</gene>
<organism>
    <name type="scientific">Rickettsia africae (strain ESF-5)</name>
    <dbReference type="NCBI Taxonomy" id="347255"/>
    <lineage>
        <taxon>Bacteria</taxon>
        <taxon>Pseudomonadati</taxon>
        <taxon>Pseudomonadota</taxon>
        <taxon>Alphaproteobacteria</taxon>
        <taxon>Rickettsiales</taxon>
        <taxon>Rickettsiaceae</taxon>
        <taxon>Rickettsieae</taxon>
        <taxon>Rickettsia</taxon>
        <taxon>spotted fever group</taxon>
    </lineage>
</organism>
<dbReference type="EMBL" id="CP001612">
    <property type="protein sequence ID" value="ACP53964.1"/>
    <property type="molecule type" value="Genomic_DNA"/>
</dbReference>
<dbReference type="RefSeq" id="WP_004997180.1">
    <property type="nucleotide sequence ID" value="NC_012633.1"/>
</dbReference>
<dbReference type="SMR" id="C3PLX4"/>
<dbReference type="KEGG" id="raf:RAF_ORF1191"/>
<dbReference type="HOGENOM" id="CLU_130694_6_2_5"/>
<dbReference type="Proteomes" id="UP000002305">
    <property type="component" value="Chromosome"/>
</dbReference>
<dbReference type="GO" id="GO:0005737">
    <property type="term" value="C:cytoplasm"/>
    <property type="evidence" value="ECO:0007669"/>
    <property type="project" value="TreeGrafter"/>
</dbReference>
<dbReference type="Gene3D" id="3.30.1200.10">
    <property type="entry name" value="YggU-like"/>
    <property type="match status" value="1"/>
</dbReference>
<dbReference type="HAMAP" id="MF_00634">
    <property type="entry name" value="UPF0235"/>
    <property type="match status" value="1"/>
</dbReference>
<dbReference type="InterPro" id="IPR003746">
    <property type="entry name" value="DUF167"/>
</dbReference>
<dbReference type="InterPro" id="IPR036591">
    <property type="entry name" value="YggU-like_sf"/>
</dbReference>
<dbReference type="NCBIfam" id="TIGR00251">
    <property type="entry name" value="DUF167 family protein"/>
    <property type="match status" value="1"/>
</dbReference>
<dbReference type="NCBIfam" id="NF002419">
    <property type="entry name" value="PRK01530.1"/>
    <property type="match status" value="1"/>
</dbReference>
<dbReference type="PANTHER" id="PTHR13420">
    <property type="entry name" value="UPF0235 PROTEIN C15ORF40"/>
    <property type="match status" value="1"/>
</dbReference>
<dbReference type="PANTHER" id="PTHR13420:SF7">
    <property type="entry name" value="UPF0235 PROTEIN C15ORF40"/>
    <property type="match status" value="1"/>
</dbReference>
<dbReference type="Pfam" id="PF02594">
    <property type="entry name" value="DUF167"/>
    <property type="match status" value="1"/>
</dbReference>
<dbReference type="SMART" id="SM01152">
    <property type="entry name" value="DUF167"/>
    <property type="match status" value="1"/>
</dbReference>
<dbReference type="SUPFAM" id="SSF69786">
    <property type="entry name" value="YggU-like"/>
    <property type="match status" value="1"/>
</dbReference>
<name>Y1191_RICAE</name>
<protein>
    <recommendedName>
        <fullName evidence="1">UPF0235 protein RAF_ORF1191</fullName>
    </recommendedName>
</protein>
<proteinExistence type="inferred from homology"/>